<gene>
    <name evidence="1" type="primary">gcvPA</name>
    <name type="ordered locus">MCA0349</name>
</gene>
<keyword id="KW-0560">Oxidoreductase</keyword>
<keyword id="KW-1185">Reference proteome</keyword>
<accession>Q60BW4</accession>
<organism>
    <name type="scientific">Methylococcus capsulatus (strain ATCC 33009 / NCIMB 11132 / Bath)</name>
    <dbReference type="NCBI Taxonomy" id="243233"/>
    <lineage>
        <taxon>Bacteria</taxon>
        <taxon>Pseudomonadati</taxon>
        <taxon>Pseudomonadota</taxon>
        <taxon>Gammaproteobacteria</taxon>
        <taxon>Methylococcales</taxon>
        <taxon>Methylococcaceae</taxon>
        <taxon>Methylococcus</taxon>
    </lineage>
</organism>
<comment type="function">
    <text evidence="1">The glycine cleavage system catalyzes the degradation of glycine. The P protein binds the alpha-amino group of glycine through its pyridoxal phosphate cofactor; CO(2) is released and the remaining methylamine moiety is then transferred to the lipoamide cofactor of the H protein.</text>
</comment>
<comment type="catalytic activity">
    <reaction evidence="1">
        <text>N(6)-[(R)-lipoyl]-L-lysyl-[glycine-cleavage complex H protein] + glycine + H(+) = N(6)-[(R)-S(8)-aminomethyldihydrolipoyl]-L-lysyl-[glycine-cleavage complex H protein] + CO2</text>
        <dbReference type="Rhea" id="RHEA:24304"/>
        <dbReference type="Rhea" id="RHEA-COMP:10494"/>
        <dbReference type="Rhea" id="RHEA-COMP:10495"/>
        <dbReference type="ChEBI" id="CHEBI:15378"/>
        <dbReference type="ChEBI" id="CHEBI:16526"/>
        <dbReference type="ChEBI" id="CHEBI:57305"/>
        <dbReference type="ChEBI" id="CHEBI:83099"/>
        <dbReference type="ChEBI" id="CHEBI:83143"/>
        <dbReference type="EC" id="1.4.4.2"/>
    </reaction>
</comment>
<comment type="subunit">
    <text evidence="1">The glycine cleavage system is composed of four proteins: P, T, L and H. In this organism, the P 'protein' is a heterodimer of two subunits.</text>
</comment>
<comment type="similarity">
    <text evidence="1">Belongs to the GcvP family. N-terminal subunit subfamily.</text>
</comment>
<feature type="chain" id="PRO_1000045668" description="Probable glycine dehydrogenase (decarboxylating) subunit 1">
    <location>
        <begin position="1"/>
        <end position="453"/>
    </location>
</feature>
<reference key="1">
    <citation type="journal article" date="2004" name="PLoS Biol.">
        <title>Genomic insights into methanotrophy: the complete genome sequence of Methylococcus capsulatus (Bath).</title>
        <authorList>
            <person name="Ward N.L."/>
            <person name="Larsen O."/>
            <person name="Sakwa J."/>
            <person name="Bruseth L."/>
            <person name="Khouri H.M."/>
            <person name="Durkin A.S."/>
            <person name="Dimitrov G."/>
            <person name="Jiang L."/>
            <person name="Scanlan D."/>
            <person name="Kang K.H."/>
            <person name="Lewis M.R."/>
            <person name="Nelson K.E."/>
            <person name="Methe B.A."/>
            <person name="Wu M."/>
            <person name="Heidelberg J.F."/>
            <person name="Paulsen I.T."/>
            <person name="Fouts D.E."/>
            <person name="Ravel J."/>
            <person name="Tettelin H."/>
            <person name="Ren Q."/>
            <person name="Read T.D."/>
            <person name="DeBoy R.T."/>
            <person name="Seshadri R."/>
            <person name="Salzberg S.L."/>
            <person name="Jensen H.B."/>
            <person name="Birkeland N.K."/>
            <person name="Nelson W.C."/>
            <person name="Dodson R.J."/>
            <person name="Grindhaug S.H."/>
            <person name="Holt I.E."/>
            <person name="Eidhammer I."/>
            <person name="Jonasen I."/>
            <person name="Vanaken S."/>
            <person name="Utterback T.R."/>
            <person name="Feldblyum T.V."/>
            <person name="Fraser C.M."/>
            <person name="Lillehaug J.R."/>
            <person name="Eisen J.A."/>
        </authorList>
    </citation>
    <scope>NUCLEOTIDE SEQUENCE [LARGE SCALE GENOMIC DNA]</scope>
    <source>
        <strain>ATCC 33009 / NCIMB 11132 / Bath</strain>
    </source>
</reference>
<dbReference type="EC" id="1.4.4.2" evidence="1"/>
<dbReference type="EMBL" id="AE017282">
    <property type="protein sequence ID" value="AAU90546.1"/>
    <property type="molecule type" value="Genomic_DNA"/>
</dbReference>
<dbReference type="RefSeq" id="WP_010959710.1">
    <property type="nucleotide sequence ID" value="NC_002977.6"/>
</dbReference>
<dbReference type="SMR" id="Q60BW4"/>
<dbReference type="STRING" id="243233.MCA0349"/>
<dbReference type="GeneID" id="88222690"/>
<dbReference type="KEGG" id="mca:MCA0349"/>
<dbReference type="eggNOG" id="COG0403">
    <property type="taxonomic scope" value="Bacteria"/>
</dbReference>
<dbReference type="HOGENOM" id="CLU_004620_0_2_6"/>
<dbReference type="Proteomes" id="UP000006821">
    <property type="component" value="Chromosome"/>
</dbReference>
<dbReference type="GO" id="GO:0004375">
    <property type="term" value="F:glycine dehydrogenase (decarboxylating) activity"/>
    <property type="evidence" value="ECO:0007669"/>
    <property type="project" value="UniProtKB-EC"/>
</dbReference>
<dbReference type="GO" id="GO:0019464">
    <property type="term" value="P:glycine decarboxylation via glycine cleavage system"/>
    <property type="evidence" value="ECO:0007669"/>
    <property type="project" value="UniProtKB-UniRule"/>
</dbReference>
<dbReference type="GO" id="GO:0009116">
    <property type="term" value="P:nucleoside metabolic process"/>
    <property type="evidence" value="ECO:0007669"/>
    <property type="project" value="InterPro"/>
</dbReference>
<dbReference type="CDD" id="cd00613">
    <property type="entry name" value="GDC-P"/>
    <property type="match status" value="1"/>
</dbReference>
<dbReference type="Gene3D" id="3.90.1150.10">
    <property type="entry name" value="Aspartate Aminotransferase, domain 1"/>
    <property type="match status" value="1"/>
</dbReference>
<dbReference type="Gene3D" id="3.40.640.10">
    <property type="entry name" value="Type I PLP-dependent aspartate aminotransferase-like (Major domain)"/>
    <property type="match status" value="1"/>
</dbReference>
<dbReference type="HAMAP" id="MF_00712">
    <property type="entry name" value="GcvPA"/>
    <property type="match status" value="1"/>
</dbReference>
<dbReference type="InterPro" id="IPR023010">
    <property type="entry name" value="GcvPA"/>
</dbReference>
<dbReference type="InterPro" id="IPR049315">
    <property type="entry name" value="GDC-P_N"/>
</dbReference>
<dbReference type="InterPro" id="IPR020581">
    <property type="entry name" value="GDC_P"/>
</dbReference>
<dbReference type="InterPro" id="IPR015424">
    <property type="entry name" value="PyrdxlP-dep_Trfase"/>
</dbReference>
<dbReference type="InterPro" id="IPR015421">
    <property type="entry name" value="PyrdxlP-dep_Trfase_major"/>
</dbReference>
<dbReference type="InterPro" id="IPR015422">
    <property type="entry name" value="PyrdxlP-dep_Trfase_small"/>
</dbReference>
<dbReference type="NCBIfam" id="NF001696">
    <property type="entry name" value="PRK00451.1"/>
    <property type="match status" value="1"/>
</dbReference>
<dbReference type="PANTHER" id="PTHR42806">
    <property type="entry name" value="GLYCINE CLEAVAGE SYSTEM P-PROTEIN"/>
    <property type="match status" value="1"/>
</dbReference>
<dbReference type="PANTHER" id="PTHR42806:SF1">
    <property type="entry name" value="GLYCINE DEHYDROGENASE (DECARBOXYLATING)"/>
    <property type="match status" value="1"/>
</dbReference>
<dbReference type="Pfam" id="PF02347">
    <property type="entry name" value="GDC-P"/>
    <property type="match status" value="1"/>
</dbReference>
<dbReference type="PIRSF" id="PIRSF006815">
    <property type="entry name" value="GcvPA"/>
    <property type="match status" value="1"/>
</dbReference>
<dbReference type="SUPFAM" id="SSF53383">
    <property type="entry name" value="PLP-dependent transferases"/>
    <property type="match status" value="1"/>
</dbReference>
<proteinExistence type="inferred from homology"/>
<sequence length="453" mass="49164">MPFIPHTEAEVRDMLAAIGAGSIDELFAEIPPDLRCGELKDLPEALSEMEVCKLMEERAAENRSALCFAGAGAYEHYIPAAVWEIALRGEFYSAYTPYQAEASQGSLQVFYEYQSMMAGLMAMDVSNASLYDGASALGEAILMALRTNPESRSRKILLPRSLNPVYKRVVRTLTRNQRVELVDLDYDRSLGRIAENALETFEGGEFAAVVIPQPNHFGVLEEVDVLADWAHRHGARSIAVVNPTAMALLKPPGEWGEHGADLACGEGQPLGIPLSAGGPYFGFLCSRQDFVHQLPGRLVGRTVDVDGREGFTLTLQPREQHIRRGKATSNICTNQGLMVTAATLYMALMGPKGLRNVAAACHANASALLERLTRIDGVEPVFPAPFFHEAAIRLPRAADRVLAGLAERGILGGHVLSADYPELGDALLICATETRGPEDMDRYAAALAEVLEC</sequence>
<evidence type="ECO:0000255" key="1">
    <source>
        <dbReference type="HAMAP-Rule" id="MF_00712"/>
    </source>
</evidence>
<name>GCSPA_METCA</name>
<protein>
    <recommendedName>
        <fullName evidence="1">Probable glycine dehydrogenase (decarboxylating) subunit 1</fullName>
        <ecNumber evidence="1">1.4.4.2</ecNumber>
    </recommendedName>
    <alternativeName>
        <fullName evidence="1">Glycine cleavage system P-protein subunit 1</fullName>
    </alternativeName>
    <alternativeName>
        <fullName evidence="1">Glycine decarboxylase subunit 1</fullName>
    </alternativeName>
    <alternativeName>
        <fullName evidence="1">Glycine dehydrogenase (aminomethyl-transferring) subunit 1</fullName>
    </alternativeName>
</protein>